<organism>
    <name type="scientific">Streptococcus pyogenes serotype M1</name>
    <dbReference type="NCBI Taxonomy" id="301447"/>
    <lineage>
        <taxon>Bacteria</taxon>
        <taxon>Bacillati</taxon>
        <taxon>Bacillota</taxon>
        <taxon>Bacilli</taxon>
        <taxon>Lactobacillales</taxon>
        <taxon>Streptococcaceae</taxon>
        <taxon>Streptococcus</taxon>
    </lineage>
</organism>
<feature type="chain" id="PRO_0000155351" description="Thymidylate kinase">
    <location>
        <begin position="1"/>
        <end position="211"/>
    </location>
</feature>
<feature type="binding site" evidence="1">
    <location>
        <begin position="11"/>
        <end position="18"/>
    </location>
    <ligand>
        <name>ATP</name>
        <dbReference type="ChEBI" id="CHEBI:30616"/>
    </ligand>
</feature>
<dbReference type="EC" id="2.7.4.9" evidence="1"/>
<dbReference type="EMBL" id="AE004092">
    <property type="protein sequence ID" value="AAK33434.1"/>
    <property type="molecule type" value="Genomic_DNA"/>
</dbReference>
<dbReference type="EMBL" id="CP000017">
    <property type="protein sequence ID" value="AAZ50949.1"/>
    <property type="molecule type" value="Genomic_DNA"/>
</dbReference>
<dbReference type="RefSeq" id="NP_268713.1">
    <property type="nucleotide sequence ID" value="NC_002737.2"/>
</dbReference>
<dbReference type="SMR" id="Q9A190"/>
<dbReference type="PaxDb" id="1314-HKU360_00369"/>
<dbReference type="KEGG" id="spy:SPy_0399"/>
<dbReference type="KEGG" id="spz:M5005_Spy0330"/>
<dbReference type="PATRIC" id="fig|160490.10.peg.342"/>
<dbReference type="HOGENOM" id="CLU_049131_0_2_9"/>
<dbReference type="OMA" id="FLYTADH"/>
<dbReference type="Proteomes" id="UP000000750">
    <property type="component" value="Chromosome"/>
</dbReference>
<dbReference type="GO" id="GO:0005829">
    <property type="term" value="C:cytosol"/>
    <property type="evidence" value="ECO:0007669"/>
    <property type="project" value="TreeGrafter"/>
</dbReference>
<dbReference type="GO" id="GO:0005524">
    <property type="term" value="F:ATP binding"/>
    <property type="evidence" value="ECO:0007669"/>
    <property type="project" value="UniProtKB-UniRule"/>
</dbReference>
<dbReference type="GO" id="GO:0004798">
    <property type="term" value="F:dTMP kinase activity"/>
    <property type="evidence" value="ECO:0007669"/>
    <property type="project" value="UniProtKB-UniRule"/>
</dbReference>
<dbReference type="GO" id="GO:0006233">
    <property type="term" value="P:dTDP biosynthetic process"/>
    <property type="evidence" value="ECO:0007669"/>
    <property type="project" value="InterPro"/>
</dbReference>
<dbReference type="GO" id="GO:0006235">
    <property type="term" value="P:dTTP biosynthetic process"/>
    <property type="evidence" value="ECO:0007669"/>
    <property type="project" value="UniProtKB-UniRule"/>
</dbReference>
<dbReference type="GO" id="GO:0006227">
    <property type="term" value="P:dUDP biosynthetic process"/>
    <property type="evidence" value="ECO:0007669"/>
    <property type="project" value="TreeGrafter"/>
</dbReference>
<dbReference type="CDD" id="cd01672">
    <property type="entry name" value="TMPK"/>
    <property type="match status" value="1"/>
</dbReference>
<dbReference type="FunFam" id="3.40.50.300:FF:000225">
    <property type="entry name" value="Thymidylate kinase"/>
    <property type="match status" value="1"/>
</dbReference>
<dbReference type="Gene3D" id="3.40.50.300">
    <property type="entry name" value="P-loop containing nucleotide triphosphate hydrolases"/>
    <property type="match status" value="1"/>
</dbReference>
<dbReference type="HAMAP" id="MF_00165">
    <property type="entry name" value="Thymidylate_kinase"/>
    <property type="match status" value="1"/>
</dbReference>
<dbReference type="InterPro" id="IPR027417">
    <property type="entry name" value="P-loop_NTPase"/>
</dbReference>
<dbReference type="InterPro" id="IPR039430">
    <property type="entry name" value="Thymidylate_kin-like_dom"/>
</dbReference>
<dbReference type="InterPro" id="IPR018094">
    <property type="entry name" value="Thymidylate_kinase"/>
</dbReference>
<dbReference type="NCBIfam" id="TIGR00041">
    <property type="entry name" value="DTMP_kinase"/>
    <property type="match status" value="1"/>
</dbReference>
<dbReference type="PANTHER" id="PTHR10344">
    <property type="entry name" value="THYMIDYLATE KINASE"/>
    <property type="match status" value="1"/>
</dbReference>
<dbReference type="PANTHER" id="PTHR10344:SF4">
    <property type="entry name" value="UMP-CMP KINASE 2, MITOCHONDRIAL"/>
    <property type="match status" value="1"/>
</dbReference>
<dbReference type="Pfam" id="PF02223">
    <property type="entry name" value="Thymidylate_kin"/>
    <property type="match status" value="1"/>
</dbReference>
<dbReference type="SUPFAM" id="SSF52540">
    <property type="entry name" value="P-loop containing nucleoside triphosphate hydrolases"/>
    <property type="match status" value="1"/>
</dbReference>
<reference key="1">
    <citation type="journal article" date="2001" name="Proc. Natl. Acad. Sci. U.S.A.">
        <title>Complete genome sequence of an M1 strain of Streptococcus pyogenes.</title>
        <authorList>
            <person name="Ferretti J.J."/>
            <person name="McShan W.M."/>
            <person name="Ajdic D.J."/>
            <person name="Savic D.J."/>
            <person name="Savic G."/>
            <person name="Lyon K."/>
            <person name="Primeaux C."/>
            <person name="Sezate S."/>
            <person name="Suvorov A.N."/>
            <person name="Kenton S."/>
            <person name="Lai H.S."/>
            <person name="Lin S.P."/>
            <person name="Qian Y."/>
            <person name="Jia H.G."/>
            <person name="Najar F.Z."/>
            <person name="Ren Q."/>
            <person name="Zhu H."/>
            <person name="Song L."/>
            <person name="White J."/>
            <person name="Yuan X."/>
            <person name="Clifton S.W."/>
            <person name="Roe B.A."/>
            <person name="McLaughlin R.E."/>
        </authorList>
    </citation>
    <scope>NUCLEOTIDE SEQUENCE [LARGE SCALE GENOMIC DNA]</scope>
    <source>
        <strain>ATCC 700294 / SF370 / Serotype M1</strain>
    </source>
</reference>
<reference key="2">
    <citation type="journal article" date="2005" name="J. Infect. Dis.">
        <title>Evolutionary origin and emergence of a highly successful clone of serotype M1 group A Streptococcus involved multiple horizontal gene transfer events.</title>
        <authorList>
            <person name="Sumby P."/>
            <person name="Porcella S.F."/>
            <person name="Madrigal A.G."/>
            <person name="Barbian K.D."/>
            <person name="Virtaneva K."/>
            <person name="Ricklefs S.M."/>
            <person name="Sturdevant D.E."/>
            <person name="Graham M.R."/>
            <person name="Vuopio-Varkila J."/>
            <person name="Hoe N.P."/>
            <person name="Musser J.M."/>
        </authorList>
    </citation>
    <scope>NUCLEOTIDE SEQUENCE [LARGE SCALE GENOMIC DNA]</scope>
    <source>
        <strain>ATCC BAA-947 / MGAS5005 / Serotype M1</strain>
    </source>
</reference>
<accession>Q9A190</accession>
<accession>Q490L9</accession>
<evidence type="ECO:0000255" key="1">
    <source>
        <dbReference type="HAMAP-Rule" id="MF_00165"/>
    </source>
</evidence>
<keyword id="KW-0067">ATP-binding</keyword>
<keyword id="KW-0418">Kinase</keyword>
<keyword id="KW-0545">Nucleotide biosynthesis</keyword>
<keyword id="KW-0547">Nucleotide-binding</keyword>
<keyword id="KW-1185">Reference proteome</keyword>
<keyword id="KW-0808">Transferase</keyword>
<gene>
    <name evidence="1" type="primary">tmk</name>
    <name type="ordered locus">SPy_0399</name>
    <name type="ordered locus">M5005_Spy0330</name>
</gene>
<protein>
    <recommendedName>
        <fullName evidence="1">Thymidylate kinase</fullName>
        <ecNumber evidence="1">2.7.4.9</ecNumber>
    </recommendedName>
    <alternativeName>
        <fullName evidence="1">dTMP kinase</fullName>
    </alternativeName>
</protein>
<sequence>MITGKLITVEGPDGAGKTTVLEQLIPLLKQKVAQDILTTREPGGVAISEHIRELILDINHTAMDPKTELLLYIAARRQHLVEKVLPALEAGQLVFIDRFIDSSVAYQGAGRGLIKADIQWLNEFATDGLEPDLTLYFDVPSEIGLARINANQQREVNRLDLETIEIHQRVRKGYLALAKEHPKRIVTIDATKPLKEVVSVALEHVLALLLA</sequence>
<comment type="function">
    <text evidence="1">Phosphorylation of dTMP to form dTDP in both de novo and salvage pathways of dTTP synthesis.</text>
</comment>
<comment type="catalytic activity">
    <reaction evidence="1">
        <text>dTMP + ATP = dTDP + ADP</text>
        <dbReference type="Rhea" id="RHEA:13517"/>
        <dbReference type="ChEBI" id="CHEBI:30616"/>
        <dbReference type="ChEBI" id="CHEBI:58369"/>
        <dbReference type="ChEBI" id="CHEBI:63528"/>
        <dbReference type="ChEBI" id="CHEBI:456216"/>
        <dbReference type="EC" id="2.7.4.9"/>
    </reaction>
</comment>
<comment type="similarity">
    <text evidence="1">Belongs to the thymidylate kinase family.</text>
</comment>
<name>KTHY_STRP1</name>
<proteinExistence type="inferred from homology"/>